<protein>
    <recommendedName>
        <fullName evidence="1">Alanine racemase</fullName>
        <ecNumber evidence="1">5.1.1.1</ecNumber>
    </recommendedName>
</protein>
<sequence>MKPFPRAEISSSALQNNLAVLRQQASSSQVMAVVKANGYGHGLLNVAKCLNNADGFGLARLEEALELRAGSVKARLLLLEGFFRSTDLPLLVEHDIDTVVHHESQIEMLEQATLSKPVTVWLKVDSGMHRLGVTPEQFSAVYARLTACKNVAKPIHLMTHFACADEPDNHYTQVQMQTFNQLTADLPGFRTLANSAGALYWPKSQGDWIRPGIAMYGVSPVTGDCGANHGLIPAMNLVSRLIAVREHKANQPVGYGCYWTAKQDTRLGVVAIGYGDGYPRNAPEGTPVWINGRRVPIVGRVSMDMLTVDLGHDATDQVGDDVLLWGQALPVEEVAEHIGTIAYELVTKLTPRVAVCLA</sequence>
<evidence type="ECO:0000255" key="1">
    <source>
        <dbReference type="HAMAP-Rule" id="MF_01201"/>
    </source>
</evidence>
<name>ALR_SHEON</name>
<accession>Q8EAI6</accession>
<proteinExistence type="inferred from homology"/>
<reference key="1">
    <citation type="journal article" date="2002" name="Nat. Biotechnol.">
        <title>Genome sequence of the dissimilatory metal ion-reducing bacterium Shewanella oneidensis.</title>
        <authorList>
            <person name="Heidelberg J.F."/>
            <person name="Paulsen I.T."/>
            <person name="Nelson K.E."/>
            <person name="Gaidos E.J."/>
            <person name="Nelson W.C."/>
            <person name="Read T.D."/>
            <person name="Eisen J.A."/>
            <person name="Seshadri R."/>
            <person name="Ward N.L."/>
            <person name="Methe B.A."/>
            <person name="Clayton R.A."/>
            <person name="Meyer T."/>
            <person name="Tsapin A."/>
            <person name="Scott J."/>
            <person name="Beanan M.J."/>
            <person name="Brinkac L.M."/>
            <person name="Daugherty S.C."/>
            <person name="DeBoy R.T."/>
            <person name="Dodson R.J."/>
            <person name="Durkin A.S."/>
            <person name="Haft D.H."/>
            <person name="Kolonay J.F."/>
            <person name="Madupu R."/>
            <person name="Peterson J.D."/>
            <person name="Umayam L.A."/>
            <person name="White O."/>
            <person name="Wolf A.M."/>
            <person name="Vamathevan J.J."/>
            <person name="Weidman J.F."/>
            <person name="Impraim M."/>
            <person name="Lee K."/>
            <person name="Berry K.J."/>
            <person name="Lee C."/>
            <person name="Mueller J."/>
            <person name="Khouri H.M."/>
            <person name="Gill J."/>
            <person name="Utterback T.R."/>
            <person name="McDonald L.A."/>
            <person name="Feldblyum T.V."/>
            <person name="Smith H.O."/>
            <person name="Venter J.C."/>
            <person name="Nealson K.H."/>
            <person name="Fraser C.M."/>
        </authorList>
    </citation>
    <scope>NUCLEOTIDE SEQUENCE [LARGE SCALE GENOMIC DNA]</scope>
    <source>
        <strain>ATCC 700550 / JCM 31522 / CIP 106686 / LMG 19005 / NCIMB 14063 / MR-1</strain>
    </source>
</reference>
<dbReference type="EC" id="5.1.1.1" evidence="1"/>
<dbReference type="EMBL" id="AE014299">
    <property type="protein sequence ID" value="AAN56891.1"/>
    <property type="molecule type" value="Genomic_DNA"/>
</dbReference>
<dbReference type="RefSeq" id="NP_719447.1">
    <property type="nucleotide sequence ID" value="NC_004347.2"/>
</dbReference>
<dbReference type="RefSeq" id="WP_011073662.1">
    <property type="nucleotide sequence ID" value="NC_004347.2"/>
</dbReference>
<dbReference type="SMR" id="Q8EAI6"/>
<dbReference type="STRING" id="211586.SO_3916"/>
<dbReference type="PaxDb" id="211586-SO_3916"/>
<dbReference type="KEGG" id="son:SO_3916"/>
<dbReference type="PATRIC" id="fig|211586.12.peg.3800"/>
<dbReference type="eggNOG" id="COG0787">
    <property type="taxonomic scope" value="Bacteria"/>
</dbReference>
<dbReference type="HOGENOM" id="CLU_028393_1_0_6"/>
<dbReference type="OrthoDB" id="9813814at2"/>
<dbReference type="PhylomeDB" id="Q8EAI6"/>
<dbReference type="BioCyc" id="SONE211586:G1GMP-3635-MONOMER"/>
<dbReference type="UniPathway" id="UPA00042">
    <property type="reaction ID" value="UER00497"/>
</dbReference>
<dbReference type="Proteomes" id="UP000008186">
    <property type="component" value="Chromosome"/>
</dbReference>
<dbReference type="GO" id="GO:0005829">
    <property type="term" value="C:cytosol"/>
    <property type="evidence" value="ECO:0000318"/>
    <property type="project" value="GO_Central"/>
</dbReference>
<dbReference type="GO" id="GO:0008784">
    <property type="term" value="F:alanine racemase activity"/>
    <property type="evidence" value="ECO:0000318"/>
    <property type="project" value="GO_Central"/>
</dbReference>
<dbReference type="GO" id="GO:0030170">
    <property type="term" value="F:pyridoxal phosphate binding"/>
    <property type="evidence" value="ECO:0000318"/>
    <property type="project" value="GO_Central"/>
</dbReference>
<dbReference type="GO" id="GO:0030632">
    <property type="term" value="P:D-alanine biosynthetic process"/>
    <property type="evidence" value="ECO:0000318"/>
    <property type="project" value="GO_Central"/>
</dbReference>
<dbReference type="CDD" id="cd06827">
    <property type="entry name" value="PLPDE_III_AR_proteobact"/>
    <property type="match status" value="1"/>
</dbReference>
<dbReference type="FunFam" id="2.40.37.10:FF:000002">
    <property type="entry name" value="Alanine racemase"/>
    <property type="match status" value="1"/>
</dbReference>
<dbReference type="FunFam" id="3.20.20.10:FF:000002">
    <property type="entry name" value="Alanine racemase"/>
    <property type="match status" value="1"/>
</dbReference>
<dbReference type="Gene3D" id="3.20.20.10">
    <property type="entry name" value="Alanine racemase"/>
    <property type="match status" value="1"/>
</dbReference>
<dbReference type="Gene3D" id="2.40.37.10">
    <property type="entry name" value="Lyase, Ornithine Decarboxylase, Chain A, domain 1"/>
    <property type="match status" value="1"/>
</dbReference>
<dbReference type="HAMAP" id="MF_01201">
    <property type="entry name" value="Ala_racemase"/>
    <property type="match status" value="1"/>
</dbReference>
<dbReference type="InterPro" id="IPR000821">
    <property type="entry name" value="Ala_racemase"/>
</dbReference>
<dbReference type="InterPro" id="IPR009006">
    <property type="entry name" value="Ala_racemase/Decarboxylase_C"/>
</dbReference>
<dbReference type="InterPro" id="IPR011079">
    <property type="entry name" value="Ala_racemase_C"/>
</dbReference>
<dbReference type="InterPro" id="IPR001608">
    <property type="entry name" value="Ala_racemase_N"/>
</dbReference>
<dbReference type="InterPro" id="IPR020622">
    <property type="entry name" value="Ala_racemase_pyridoxalP-BS"/>
</dbReference>
<dbReference type="InterPro" id="IPR029066">
    <property type="entry name" value="PLP-binding_barrel"/>
</dbReference>
<dbReference type="NCBIfam" id="TIGR00492">
    <property type="entry name" value="alr"/>
    <property type="match status" value="1"/>
</dbReference>
<dbReference type="PANTHER" id="PTHR30511">
    <property type="entry name" value="ALANINE RACEMASE"/>
    <property type="match status" value="1"/>
</dbReference>
<dbReference type="PANTHER" id="PTHR30511:SF4">
    <property type="entry name" value="ALANINE RACEMASE, BIOSYNTHETIC"/>
    <property type="match status" value="1"/>
</dbReference>
<dbReference type="Pfam" id="PF00842">
    <property type="entry name" value="Ala_racemase_C"/>
    <property type="match status" value="1"/>
</dbReference>
<dbReference type="Pfam" id="PF01168">
    <property type="entry name" value="Ala_racemase_N"/>
    <property type="match status" value="1"/>
</dbReference>
<dbReference type="PRINTS" id="PR00992">
    <property type="entry name" value="ALARACEMASE"/>
</dbReference>
<dbReference type="SMART" id="SM01005">
    <property type="entry name" value="Ala_racemase_C"/>
    <property type="match status" value="1"/>
</dbReference>
<dbReference type="SUPFAM" id="SSF50621">
    <property type="entry name" value="Alanine racemase C-terminal domain-like"/>
    <property type="match status" value="1"/>
</dbReference>
<dbReference type="SUPFAM" id="SSF51419">
    <property type="entry name" value="PLP-binding barrel"/>
    <property type="match status" value="1"/>
</dbReference>
<dbReference type="PROSITE" id="PS00395">
    <property type="entry name" value="ALANINE_RACEMASE"/>
    <property type="match status" value="1"/>
</dbReference>
<comment type="function">
    <text evidence="1">Catalyzes the interconversion of L-alanine and D-alanine. May also act on other amino acids.</text>
</comment>
<comment type="catalytic activity">
    <reaction evidence="1">
        <text>L-alanine = D-alanine</text>
        <dbReference type="Rhea" id="RHEA:20249"/>
        <dbReference type="ChEBI" id="CHEBI:57416"/>
        <dbReference type="ChEBI" id="CHEBI:57972"/>
        <dbReference type="EC" id="5.1.1.1"/>
    </reaction>
</comment>
<comment type="cofactor">
    <cofactor evidence="1">
        <name>pyridoxal 5'-phosphate</name>
        <dbReference type="ChEBI" id="CHEBI:597326"/>
    </cofactor>
</comment>
<comment type="pathway">
    <text evidence="1">Amino-acid biosynthesis; D-alanine biosynthesis; D-alanine from L-alanine: step 1/1.</text>
</comment>
<comment type="similarity">
    <text evidence="1">Belongs to the alanine racemase family.</text>
</comment>
<keyword id="KW-0413">Isomerase</keyword>
<keyword id="KW-0663">Pyridoxal phosphate</keyword>
<keyword id="KW-1185">Reference proteome</keyword>
<organism>
    <name type="scientific">Shewanella oneidensis (strain ATCC 700550 / JCM 31522 / CIP 106686 / LMG 19005 / NCIMB 14063 / MR-1)</name>
    <dbReference type="NCBI Taxonomy" id="211586"/>
    <lineage>
        <taxon>Bacteria</taxon>
        <taxon>Pseudomonadati</taxon>
        <taxon>Pseudomonadota</taxon>
        <taxon>Gammaproteobacteria</taxon>
        <taxon>Alteromonadales</taxon>
        <taxon>Shewanellaceae</taxon>
        <taxon>Shewanella</taxon>
    </lineage>
</organism>
<gene>
    <name type="primary">alr</name>
    <name type="ordered locus">SO_3916</name>
</gene>
<feature type="chain" id="PRO_1000164616" description="Alanine racemase">
    <location>
        <begin position="1"/>
        <end position="358"/>
    </location>
</feature>
<feature type="active site" description="Proton acceptor; specific for D-alanine" evidence="1">
    <location>
        <position position="35"/>
    </location>
</feature>
<feature type="active site" description="Proton acceptor; specific for L-alanine" evidence="1">
    <location>
        <position position="255"/>
    </location>
</feature>
<feature type="binding site" evidence="1">
    <location>
        <position position="130"/>
    </location>
    <ligand>
        <name>substrate</name>
    </ligand>
</feature>
<feature type="binding site" evidence="1">
    <location>
        <position position="303"/>
    </location>
    <ligand>
        <name>substrate</name>
    </ligand>
</feature>
<feature type="modified residue" description="N6-(pyridoxal phosphate)lysine" evidence="1">
    <location>
        <position position="35"/>
    </location>
</feature>